<name>RL27_RHOPB</name>
<gene>
    <name evidence="1" type="primary">rpmA</name>
    <name type="ordered locus">RPC_0154</name>
</gene>
<comment type="similarity">
    <text evidence="1">Belongs to the bacterial ribosomal protein bL27 family.</text>
</comment>
<proteinExistence type="inferred from homology"/>
<reference key="1">
    <citation type="submission" date="2006-03" db="EMBL/GenBank/DDBJ databases">
        <title>Complete sequence of Rhodopseudomonas palustris BisB18.</title>
        <authorList>
            <consortium name="US DOE Joint Genome Institute"/>
            <person name="Copeland A."/>
            <person name="Lucas S."/>
            <person name="Lapidus A."/>
            <person name="Barry K."/>
            <person name="Detter J.C."/>
            <person name="Glavina del Rio T."/>
            <person name="Hammon N."/>
            <person name="Israni S."/>
            <person name="Dalin E."/>
            <person name="Tice H."/>
            <person name="Pitluck S."/>
            <person name="Chain P."/>
            <person name="Malfatti S."/>
            <person name="Shin M."/>
            <person name="Vergez L."/>
            <person name="Schmutz J."/>
            <person name="Larimer F."/>
            <person name="Land M."/>
            <person name="Hauser L."/>
            <person name="Pelletier D.A."/>
            <person name="Kyrpides N."/>
            <person name="Anderson I."/>
            <person name="Oda Y."/>
            <person name="Harwood C.S."/>
            <person name="Richardson P."/>
        </authorList>
    </citation>
    <scope>NUCLEOTIDE SEQUENCE [LARGE SCALE GENOMIC DNA]</scope>
    <source>
        <strain>BisB18</strain>
    </source>
</reference>
<organism>
    <name type="scientific">Rhodopseudomonas palustris (strain BisB18)</name>
    <dbReference type="NCBI Taxonomy" id="316056"/>
    <lineage>
        <taxon>Bacteria</taxon>
        <taxon>Pseudomonadati</taxon>
        <taxon>Pseudomonadota</taxon>
        <taxon>Alphaproteobacteria</taxon>
        <taxon>Hyphomicrobiales</taxon>
        <taxon>Nitrobacteraceae</taxon>
        <taxon>Rhodopseudomonas</taxon>
    </lineage>
</organism>
<keyword id="KW-0687">Ribonucleoprotein</keyword>
<keyword id="KW-0689">Ribosomal protein</keyword>
<feature type="chain" id="PRO_1000017578" description="Large ribosomal subunit protein bL27">
    <location>
        <begin position="1"/>
        <end position="90"/>
    </location>
</feature>
<feature type="region of interest" description="Disordered" evidence="2">
    <location>
        <begin position="1"/>
        <end position="20"/>
    </location>
</feature>
<protein>
    <recommendedName>
        <fullName evidence="1">Large ribosomal subunit protein bL27</fullName>
    </recommendedName>
    <alternativeName>
        <fullName evidence="3">50S ribosomal protein L27</fullName>
    </alternativeName>
</protein>
<evidence type="ECO:0000255" key="1">
    <source>
        <dbReference type="HAMAP-Rule" id="MF_00539"/>
    </source>
</evidence>
<evidence type="ECO:0000256" key="2">
    <source>
        <dbReference type="SAM" id="MobiDB-lite"/>
    </source>
</evidence>
<evidence type="ECO:0000305" key="3"/>
<dbReference type="EMBL" id="CP000301">
    <property type="protein sequence ID" value="ABD85729.1"/>
    <property type="molecule type" value="Genomic_DNA"/>
</dbReference>
<dbReference type="SMR" id="Q21D07"/>
<dbReference type="STRING" id="316056.RPC_0154"/>
<dbReference type="KEGG" id="rpc:RPC_0154"/>
<dbReference type="eggNOG" id="COG0211">
    <property type="taxonomic scope" value="Bacteria"/>
</dbReference>
<dbReference type="HOGENOM" id="CLU_095424_4_1_5"/>
<dbReference type="OrthoDB" id="9803474at2"/>
<dbReference type="GO" id="GO:0022625">
    <property type="term" value="C:cytosolic large ribosomal subunit"/>
    <property type="evidence" value="ECO:0007669"/>
    <property type="project" value="TreeGrafter"/>
</dbReference>
<dbReference type="GO" id="GO:0003735">
    <property type="term" value="F:structural constituent of ribosome"/>
    <property type="evidence" value="ECO:0007669"/>
    <property type="project" value="InterPro"/>
</dbReference>
<dbReference type="GO" id="GO:0006412">
    <property type="term" value="P:translation"/>
    <property type="evidence" value="ECO:0007669"/>
    <property type="project" value="UniProtKB-UniRule"/>
</dbReference>
<dbReference type="FunFam" id="2.40.50.100:FF:000020">
    <property type="entry name" value="50S ribosomal protein L27"/>
    <property type="match status" value="1"/>
</dbReference>
<dbReference type="Gene3D" id="2.40.50.100">
    <property type="match status" value="1"/>
</dbReference>
<dbReference type="HAMAP" id="MF_00539">
    <property type="entry name" value="Ribosomal_bL27"/>
    <property type="match status" value="1"/>
</dbReference>
<dbReference type="InterPro" id="IPR001684">
    <property type="entry name" value="Ribosomal_bL27"/>
</dbReference>
<dbReference type="InterPro" id="IPR018261">
    <property type="entry name" value="Ribosomal_bL27_CS"/>
</dbReference>
<dbReference type="NCBIfam" id="TIGR00062">
    <property type="entry name" value="L27"/>
    <property type="match status" value="1"/>
</dbReference>
<dbReference type="PANTHER" id="PTHR15893:SF0">
    <property type="entry name" value="LARGE RIBOSOMAL SUBUNIT PROTEIN BL27M"/>
    <property type="match status" value="1"/>
</dbReference>
<dbReference type="PANTHER" id="PTHR15893">
    <property type="entry name" value="RIBOSOMAL PROTEIN L27"/>
    <property type="match status" value="1"/>
</dbReference>
<dbReference type="Pfam" id="PF01016">
    <property type="entry name" value="Ribosomal_L27"/>
    <property type="match status" value="1"/>
</dbReference>
<dbReference type="PRINTS" id="PR00063">
    <property type="entry name" value="RIBOSOMALL27"/>
</dbReference>
<dbReference type="SUPFAM" id="SSF110324">
    <property type="entry name" value="Ribosomal L27 protein-like"/>
    <property type="match status" value="1"/>
</dbReference>
<dbReference type="PROSITE" id="PS00831">
    <property type="entry name" value="RIBOSOMAL_L27"/>
    <property type="match status" value="1"/>
</dbReference>
<accession>Q21D07</accession>
<sequence>MAHKKAGGSSRNGRDSAGKRLGIKAYGGERVIPGNIIARQRGTTWHPGLNVGMGTDHTLFAKVEGHVEFRAKANGRTFVSVLPIAVAAAE</sequence>